<sequence>MKSAKKLLSVLCLGIFILTFTACDMVEKTPEAKAKSTIAKVNGEKIQRKDLDESPSMQQVLSQIKTQYGEEFEKSEQGKEVIKEQKKQILENLITEKVLLQKGKELKVIPKDEELNKEADKKVNEIKAVYNNDEKKFEETLKSTGFTKETLKEYLRDQIVIEKVINEVTKDVKVEDKDAQKYYNENQSMFTEKPNTMNVSHILVKTEDEAKKVKKRLDAKEDFAKVAKEVSQDPGSKDKGGLLGDISYSDSNYDPTFMKAAIALKEGTISNPVHTQWGYHIIKVNSKKEYPVKKFDSVKEDIKKQLKQEKQQEAYTKKIEEWKKASKIKTYEKNLL</sequence>
<keyword id="KW-1003">Cell membrane</keyword>
<keyword id="KW-0413">Isomerase</keyword>
<keyword id="KW-0449">Lipoprotein</keyword>
<keyword id="KW-0472">Membrane</keyword>
<keyword id="KW-0564">Palmitate</keyword>
<keyword id="KW-0697">Rotamase</keyword>
<keyword id="KW-0732">Signal</keyword>
<reference key="1">
    <citation type="journal article" date="2007" name="PLoS ONE">
        <title>Analysis of the neurotoxin complex genes in Clostridium botulinum A1-A4 and B1 strains: BoNT/A3, /Ba4 and /B1 clusters are located within plasmids.</title>
        <authorList>
            <person name="Smith T.J."/>
            <person name="Hill K.K."/>
            <person name="Foley B.T."/>
            <person name="Detter J.C."/>
            <person name="Munk A.C."/>
            <person name="Bruce D.C."/>
            <person name="Doggett N.A."/>
            <person name="Smith L.A."/>
            <person name="Marks J.D."/>
            <person name="Xie G."/>
            <person name="Brettin T.S."/>
        </authorList>
    </citation>
    <scope>NUCLEOTIDE SEQUENCE [LARGE SCALE GENOMIC DNA]</scope>
    <source>
        <strain>ATCC 19397 / Type A</strain>
    </source>
</reference>
<comment type="function">
    <text evidence="1">Plays a major role in protein secretion by helping the post-translocational extracellular folding of several secreted proteins.</text>
</comment>
<comment type="catalytic activity">
    <reaction evidence="1">
        <text>[protein]-peptidylproline (omega=180) = [protein]-peptidylproline (omega=0)</text>
        <dbReference type="Rhea" id="RHEA:16237"/>
        <dbReference type="Rhea" id="RHEA-COMP:10747"/>
        <dbReference type="Rhea" id="RHEA-COMP:10748"/>
        <dbReference type="ChEBI" id="CHEBI:83833"/>
        <dbReference type="ChEBI" id="CHEBI:83834"/>
        <dbReference type="EC" id="5.2.1.8"/>
    </reaction>
</comment>
<comment type="subcellular location">
    <subcellularLocation>
        <location evidence="1">Cell membrane</location>
        <topology evidence="1">Lipid-anchor</topology>
    </subcellularLocation>
</comment>
<comment type="similarity">
    <text evidence="1">Belongs to the PrsA family.</text>
</comment>
<gene>
    <name evidence="1" type="primary">prsA</name>
    <name type="ordered locus">CLB_3619</name>
</gene>
<accession>A7FPK5</accession>
<proteinExistence type="inferred from homology"/>
<organism>
    <name type="scientific">Clostridium botulinum (strain ATCC 19397 / Type A)</name>
    <dbReference type="NCBI Taxonomy" id="441770"/>
    <lineage>
        <taxon>Bacteria</taxon>
        <taxon>Bacillati</taxon>
        <taxon>Bacillota</taxon>
        <taxon>Clostridia</taxon>
        <taxon>Eubacteriales</taxon>
        <taxon>Clostridiaceae</taxon>
        <taxon>Clostridium</taxon>
    </lineage>
</organism>
<dbReference type="EC" id="5.2.1.8" evidence="1"/>
<dbReference type="EMBL" id="CP000726">
    <property type="protein sequence ID" value="ABS34877.1"/>
    <property type="molecule type" value="Genomic_DNA"/>
</dbReference>
<dbReference type="RefSeq" id="WP_012048382.1">
    <property type="nucleotide sequence ID" value="NC_009697.1"/>
</dbReference>
<dbReference type="SMR" id="A7FPK5"/>
<dbReference type="KEGG" id="cba:CLB_3619"/>
<dbReference type="HOGENOM" id="CLU_034646_5_2_9"/>
<dbReference type="GO" id="GO:0005886">
    <property type="term" value="C:plasma membrane"/>
    <property type="evidence" value="ECO:0007669"/>
    <property type="project" value="UniProtKB-SubCell"/>
</dbReference>
<dbReference type="GO" id="GO:0003755">
    <property type="term" value="F:peptidyl-prolyl cis-trans isomerase activity"/>
    <property type="evidence" value="ECO:0007669"/>
    <property type="project" value="UniProtKB-UniRule"/>
</dbReference>
<dbReference type="GO" id="GO:0006457">
    <property type="term" value="P:protein folding"/>
    <property type="evidence" value="ECO:0007669"/>
    <property type="project" value="UniProtKB-UniRule"/>
</dbReference>
<dbReference type="Gene3D" id="3.10.50.40">
    <property type="match status" value="1"/>
</dbReference>
<dbReference type="Gene3D" id="1.10.4030.10">
    <property type="entry name" value="Porin chaperone SurA, peptide-binding domain"/>
    <property type="match status" value="1"/>
</dbReference>
<dbReference type="HAMAP" id="MF_01145">
    <property type="entry name" value="Foldase_PrsA"/>
    <property type="match status" value="1"/>
</dbReference>
<dbReference type="InterPro" id="IPR023059">
    <property type="entry name" value="Foldase_PrsA"/>
</dbReference>
<dbReference type="InterPro" id="IPR046357">
    <property type="entry name" value="PPIase_dom_sf"/>
</dbReference>
<dbReference type="InterPro" id="IPR000297">
    <property type="entry name" value="PPIase_PpiC"/>
</dbReference>
<dbReference type="InterPro" id="IPR023058">
    <property type="entry name" value="PPIase_PpiC_CS"/>
</dbReference>
<dbReference type="InterPro" id="IPR050245">
    <property type="entry name" value="PrsA_foldase"/>
</dbReference>
<dbReference type="InterPro" id="IPR027304">
    <property type="entry name" value="Trigger_fact/SurA_dom_sf"/>
</dbReference>
<dbReference type="NCBIfam" id="NF000809">
    <property type="entry name" value="PRK00059.1"/>
    <property type="match status" value="1"/>
</dbReference>
<dbReference type="PANTHER" id="PTHR47245:SF1">
    <property type="entry name" value="FOLDASE PROTEIN PRSA"/>
    <property type="match status" value="1"/>
</dbReference>
<dbReference type="PANTHER" id="PTHR47245">
    <property type="entry name" value="PEPTIDYLPROLYL ISOMERASE"/>
    <property type="match status" value="1"/>
</dbReference>
<dbReference type="Pfam" id="PF13145">
    <property type="entry name" value="Rotamase_2"/>
    <property type="match status" value="1"/>
</dbReference>
<dbReference type="Pfam" id="PF13624">
    <property type="entry name" value="SurA_N_3"/>
    <property type="match status" value="1"/>
</dbReference>
<dbReference type="SUPFAM" id="SSF54534">
    <property type="entry name" value="FKBP-like"/>
    <property type="match status" value="1"/>
</dbReference>
<dbReference type="SUPFAM" id="SSF109998">
    <property type="entry name" value="Triger factor/SurA peptide-binding domain-like"/>
    <property type="match status" value="1"/>
</dbReference>
<dbReference type="PROSITE" id="PS01096">
    <property type="entry name" value="PPIC_PPIASE_1"/>
    <property type="match status" value="1"/>
</dbReference>
<dbReference type="PROSITE" id="PS50198">
    <property type="entry name" value="PPIC_PPIASE_2"/>
    <property type="match status" value="1"/>
</dbReference>
<dbReference type="PROSITE" id="PS51257">
    <property type="entry name" value="PROKAR_LIPOPROTEIN"/>
    <property type="match status" value="1"/>
</dbReference>
<evidence type="ECO:0000255" key="1">
    <source>
        <dbReference type="HAMAP-Rule" id="MF_01145"/>
    </source>
</evidence>
<name>PRSA_CLOB1</name>
<protein>
    <recommendedName>
        <fullName evidence="1">Foldase protein PrsA</fullName>
        <ecNumber evidence="1">5.2.1.8</ecNumber>
    </recommendedName>
</protein>
<feature type="signal peptide" evidence="1">
    <location>
        <begin position="1"/>
        <end position="22"/>
    </location>
</feature>
<feature type="chain" id="PRO_1000137379" description="Foldase protein PrsA">
    <location>
        <begin position="23"/>
        <end position="336"/>
    </location>
</feature>
<feature type="domain" description="PpiC" evidence="1">
    <location>
        <begin position="194"/>
        <end position="286"/>
    </location>
</feature>
<feature type="lipid moiety-binding region" description="N-palmitoyl cysteine" evidence="1">
    <location>
        <position position="23"/>
    </location>
</feature>
<feature type="lipid moiety-binding region" description="S-diacylglycerol cysteine" evidence="1">
    <location>
        <position position="23"/>
    </location>
</feature>